<evidence type="ECO:0000256" key="1">
    <source>
        <dbReference type="SAM" id="MobiDB-lite"/>
    </source>
</evidence>
<evidence type="ECO:0000269" key="2">
    <source>
    </source>
</evidence>
<evidence type="ECO:0000269" key="3">
    <source>
    </source>
</evidence>
<evidence type="ECO:0000269" key="4">
    <source>
    </source>
</evidence>
<evidence type="ECO:0000305" key="5"/>
<evidence type="ECO:0007744" key="6">
    <source>
    </source>
</evidence>
<evidence type="ECO:0007829" key="7">
    <source>
        <dbReference type="PDB" id="2YN0"/>
    </source>
</evidence>
<evidence type="ECO:0007829" key="8">
    <source>
        <dbReference type="PDB" id="6YJ6"/>
    </source>
</evidence>
<protein>
    <recommendedName>
        <fullName>Transcription factor tau 55 kDa subunit</fullName>
    </recommendedName>
    <alternativeName>
        <fullName>TFIIIC 55 kDa subunit</fullName>
    </alternativeName>
    <alternativeName>
        <fullName>Transcription factor C subunit 7</fullName>
    </alternativeName>
</protein>
<dbReference type="EMBL" id="X94335">
    <property type="protein sequence ID" value="CAA64030.1"/>
    <property type="molecule type" value="Genomic_DNA"/>
</dbReference>
<dbReference type="EMBL" id="Z75018">
    <property type="protein sequence ID" value="CAA99308.1"/>
    <property type="molecule type" value="Genomic_DNA"/>
</dbReference>
<dbReference type="EMBL" id="AY692910">
    <property type="protein sequence ID" value="AAT92929.1"/>
    <property type="molecule type" value="Genomic_DNA"/>
</dbReference>
<dbReference type="EMBL" id="X90518">
    <property type="protein sequence ID" value="CAA62104.1"/>
    <property type="molecule type" value="Genomic_DNA"/>
</dbReference>
<dbReference type="EMBL" id="BK006948">
    <property type="protein sequence ID" value="DAA10885.1"/>
    <property type="molecule type" value="Genomic_DNA"/>
</dbReference>
<dbReference type="PIR" id="S61668">
    <property type="entry name" value="S61668"/>
</dbReference>
<dbReference type="RefSeq" id="NP_014753.1">
    <property type="nucleotide sequence ID" value="NM_001183529.1"/>
</dbReference>
<dbReference type="PDB" id="2YN0">
    <property type="method" value="X-ray"/>
    <property type="resolution" value="1.50 A"/>
    <property type="chains" value="A=3-272"/>
</dbReference>
<dbReference type="PDB" id="6YJ6">
    <property type="method" value="EM"/>
    <property type="resolution" value="3.10 A"/>
    <property type="chains" value="C=1-435"/>
</dbReference>
<dbReference type="PDB" id="8FFZ">
    <property type="method" value="EM"/>
    <property type="resolution" value="3.80 A"/>
    <property type="chains" value="G=1-435"/>
</dbReference>
<dbReference type="PDB" id="9GCK">
    <property type="method" value="EM"/>
    <property type="resolution" value="3.70 A"/>
    <property type="chains" value="D=1-435"/>
</dbReference>
<dbReference type="PDBsum" id="2YN0"/>
<dbReference type="PDBsum" id="6YJ6"/>
<dbReference type="PDBsum" id="8FFZ"/>
<dbReference type="PDBsum" id="9GCK"/>
<dbReference type="EMDB" id="EMD-10817"/>
<dbReference type="EMDB" id="EMD-29071"/>
<dbReference type="EMDB" id="EMD-51231"/>
<dbReference type="SMR" id="Q12415"/>
<dbReference type="BioGRID" id="34506">
    <property type="interactions" value="35"/>
</dbReference>
<dbReference type="ComplexPortal" id="CPX-1656">
    <property type="entry name" value="General transcription factor TFIIIC complex"/>
</dbReference>
<dbReference type="DIP" id="DIP-2309N"/>
<dbReference type="FunCoup" id="Q12415">
    <property type="interactions" value="157"/>
</dbReference>
<dbReference type="IntAct" id="Q12415">
    <property type="interactions" value="18"/>
</dbReference>
<dbReference type="MINT" id="Q12415"/>
<dbReference type="STRING" id="4932.YOR110W"/>
<dbReference type="iPTMnet" id="Q12415"/>
<dbReference type="PaxDb" id="4932-YOR110W"/>
<dbReference type="PeptideAtlas" id="Q12415"/>
<dbReference type="EnsemblFungi" id="YOR110W_mRNA">
    <property type="protein sequence ID" value="YOR110W"/>
    <property type="gene ID" value="YOR110W"/>
</dbReference>
<dbReference type="GeneID" id="854277"/>
<dbReference type="KEGG" id="sce:YOR110W"/>
<dbReference type="AGR" id="SGD:S000005636"/>
<dbReference type="SGD" id="S000005636">
    <property type="gene designation" value="TFC7"/>
</dbReference>
<dbReference type="VEuPathDB" id="FungiDB:YOR110W"/>
<dbReference type="eggNOG" id="ENOG502RYP8">
    <property type="taxonomic scope" value="Eukaryota"/>
</dbReference>
<dbReference type="GeneTree" id="ENSGT00940000167071"/>
<dbReference type="HOGENOM" id="CLU_042838_0_0_1"/>
<dbReference type="InParanoid" id="Q12415"/>
<dbReference type="OMA" id="ICAHAAP"/>
<dbReference type="OrthoDB" id="414418at2759"/>
<dbReference type="BioCyc" id="YEAST:G3O-33639-MONOMER"/>
<dbReference type="BioGRID-ORCS" id="854277">
    <property type="hits" value="0 hits in 10 CRISPR screens"/>
</dbReference>
<dbReference type="EvolutionaryTrace" id="Q12415"/>
<dbReference type="PRO" id="PR:Q12415"/>
<dbReference type="Proteomes" id="UP000002311">
    <property type="component" value="Chromosome XV"/>
</dbReference>
<dbReference type="RNAct" id="Q12415">
    <property type="molecule type" value="protein"/>
</dbReference>
<dbReference type="GO" id="GO:0005634">
    <property type="term" value="C:nucleus"/>
    <property type="evidence" value="ECO:0000303"/>
    <property type="project" value="ComplexPortal"/>
</dbReference>
<dbReference type="GO" id="GO:0000127">
    <property type="term" value="C:transcription factor TFIIIC complex"/>
    <property type="evidence" value="ECO:0000314"/>
    <property type="project" value="SGD"/>
</dbReference>
<dbReference type="GO" id="GO:0003677">
    <property type="term" value="F:DNA binding"/>
    <property type="evidence" value="ECO:0007669"/>
    <property type="project" value="UniProtKB-KW"/>
</dbReference>
<dbReference type="GO" id="GO:0016791">
    <property type="term" value="F:phosphatase activity"/>
    <property type="evidence" value="ECO:0000314"/>
    <property type="project" value="SGD"/>
</dbReference>
<dbReference type="GO" id="GO:0042791">
    <property type="term" value="P:5S class rRNA transcription by RNA polymerase III"/>
    <property type="evidence" value="ECO:0000314"/>
    <property type="project" value="SGD"/>
</dbReference>
<dbReference type="GO" id="GO:0006383">
    <property type="term" value="P:transcription by RNA polymerase III"/>
    <property type="evidence" value="ECO:0000314"/>
    <property type="project" value="SGD"/>
</dbReference>
<dbReference type="GO" id="GO:0006384">
    <property type="term" value="P:transcription initiation at RNA polymerase III promoter"/>
    <property type="evidence" value="ECO:0000303"/>
    <property type="project" value="ComplexPortal"/>
</dbReference>
<dbReference type="CDD" id="cd07067">
    <property type="entry name" value="HP_PGM_like"/>
    <property type="match status" value="1"/>
</dbReference>
<dbReference type="FunFam" id="3.40.50.1240:FF:000034">
    <property type="entry name" value="Transcription factor TFIIIC subunit"/>
    <property type="match status" value="1"/>
</dbReference>
<dbReference type="Gene3D" id="2.60.40.4370">
    <property type="match status" value="1"/>
</dbReference>
<dbReference type="Gene3D" id="3.40.50.1240">
    <property type="entry name" value="Phosphoglycerate mutase-like"/>
    <property type="match status" value="1"/>
</dbReference>
<dbReference type="InterPro" id="IPR013078">
    <property type="entry name" value="His_Pase_superF_clade-1"/>
</dbReference>
<dbReference type="InterPro" id="IPR029033">
    <property type="entry name" value="His_PPase_superfam"/>
</dbReference>
<dbReference type="InterPro" id="IPR051710">
    <property type="entry name" value="Phosphatase_SH3-domain"/>
</dbReference>
<dbReference type="InterPro" id="IPR014623">
    <property type="entry name" value="Tfc7/tau55"/>
</dbReference>
<dbReference type="InterPro" id="IPR019481">
    <property type="entry name" value="TFIIIC_triple_barrel"/>
</dbReference>
<dbReference type="PANTHER" id="PTHR16469:SF51">
    <property type="entry name" value="TRANSCRIPTION FACTOR TAU 55 KDA SUBUNIT"/>
    <property type="match status" value="1"/>
</dbReference>
<dbReference type="PANTHER" id="PTHR16469">
    <property type="entry name" value="UBIQUITIN-ASSOCIATED AND SH3 DOMAIN-CONTAINING BA-RELATED"/>
    <property type="match status" value="1"/>
</dbReference>
<dbReference type="Pfam" id="PF00300">
    <property type="entry name" value="His_Phos_1"/>
    <property type="match status" value="1"/>
</dbReference>
<dbReference type="Pfam" id="PF10419">
    <property type="entry name" value="TFIIIC_sub6"/>
    <property type="match status" value="1"/>
</dbReference>
<dbReference type="PIRSF" id="PIRSF036802">
    <property type="entry name" value="Tau55_TFC7"/>
    <property type="match status" value="1"/>
</dbReference>
<dbReference type="SMART" id="SM00855">
    <property type="entry name" value="PGAM"/>
    <property type="match status" value="1"/>
</dbReference>
<dbReference type="SUPFAM" id="SSF53254">
    <property type="entry name" value="Phosphoglycerate mutase-like"/>
    <property type="match status" value="1"/>
</dbReference>
<comment type="function">
    <text evidence="4">TFIIIC mediates tRNA and 5S RNA gene activation by binding to intragenic promoter elements. Upstream of the transcription start site, TFIIIC assembles the initiation complex TFIIIB-TFIIIC-tDNA, which is sufficient for RNA polymerase III recruitment and function. Part of the tauA domain of TFIIIC that binds boxA DNA promoter sites of tRNA and similar genes.</text>
</comment>
<comment type="subunit">
    <text evidence="4">Component of the TFIIIC complex composed of TFC1, TFC3, TFC4, TFC6, TFC7 and TFC8. The subunits are organized in two globular domains, tauA and tauB, connected by a proteolysis-sensitive and flexible linker.</text>
</comment>
<comment type="interaction">
    <interactant intactId="EBI-33456">
        <id>Q12415</id>
    </interactant>
    <interactant intactId="EBI-19150">
        <id>P32367</id>
        <label>TFC1</label>
    </interactant>
    <organismsDiffer>false</organismsDiffer>
    <experiments>4</experiments>
</comment>
<comment type="interaction">
    <interactant intactId="EBI-33456">
        <id>Q12415</id>
    </interactant>
    <interactant intactId="EBI-31399">
        <id>Q12308</id>
        <label>TFC8</label>
    </interactant>
    <organismsDiffer>false</organismsDiffer>
    <experiments>3</experiments>
</comment>
<comment type="subcellular location">
    <subcellularLocation>
        <location evidence="2">Nucleus</location>
    </subcellularLocation>
</comment>
<comment type="miscellaneous">
    <text evidence="3">Present with 2660 molecules/cell in log phase SD medium.</text>
</comment>
<keyword id="KW-0002">3D-structure</keyword>
<keyword id="KW-0903">Direct protein sequencing</keyword>
<keyword id="KW-0238">DNA-binding</keyword>
<keyword id="KW-0539">Nucleus</keyword>
<keyword id="KW-0597">Phosphoprotein</keyword>
<keyword id="KW-1185">Reference proteome</keyword>
<keyword id="KW-0804">Transcription</keyword>
<keyword id="KW-0805">Transcription regulation</keyword>
<name>TFC7_YEAST</name>
<proteinExistence type="evidence at protein level"/>
<gene>
    <name type="primary">TFC7</name>
    <name type="ordered locus">YOR110W</name>
    <name type="ORF">O3234</name>
    <name type="ORF">YOR3234w</name>
</gene>
<accession>Q12415</accession>
<accession>D6W2G9</accession>
<accession>Q07347</accession>
<accession>Q6B220</accession>
<reference key="1">
    <citation type="journal article" date="1998" name="Mol. Cell. Biol.">
        <title>A chimeric subunit of yeast transcription factor IIIC forms a subcomplex with tau95.</title>
        <authorList>
            <person name="Manaud N."/>
            <person name="Arrebola R."/>
            <person name="Buffin-Meyer B."/>
            <person name="Lefebvre O."/>
            <person name="Voss H."/>
            <person name="Riva M."/>
            <person name="Conesa C."/>
            <person name="Sentenac A."/>
        </authorList>
    </citation>
    <scope>NUCLEOTIDE SEQUENCE [GENOMIC DNA]</scope>
    <scope>PROTEIN SEQUENCE OF 62-66; 81-85; 183-188; 227-237; 341-346 AND 347-352</scope>
    <scope>FUNCTION</scope>
    <scope>IDENTIFICATION IN TFIIIC</scope>
</reference>
<reference key="2">
    <citation type="journal article" date="1997" name="Yeast">
        <title>DNA sequencing and analysis of 130 kb from yeast chromosome XV.</title>
        <authorList>
            <person name="Voss H."/>
            <person name="Benes V."/>
            <person name="Andrade M.A."/>
            <person name="Valencia A."/>
            <person name="Rechmann S."/>
            <person name="Teodoru C."/>
            <person name="Schwager C."/>
            <person name="Paces V."/>
            <person name="Sander C."/>
            <person name="Ansorge W."/>
        </authorList>
    </citation>
    <scope>NUCLEOTIDE SEQUENCE [GENOMIC DNA]</scope>
</reference>
<reference key="3">
    <citation type="journal article" date="1997" name="Nature">
        <title>The nucleotide sequence of Saccharomyces cerevisiae chromosome XV.</title>
        <authorList>
            <person name="Dujon B."/>
            <person name="Albermann K."/>
            <person name="Aldea M."/>
            <person name="Alexandraki D."/>
            <person name="Ansorge W."/>
            <person name="Arino J."/>
            <person name="Benes V."/>
            <person name="Bohn C."/>
            <person name="Bolotin-Fukuhara M."/>
            <person name="Bordonne R."/>
            <person name="Boyer J."/>
            <person name="Camasses A."/>
            <person name="Casamayor A."/>
            <person name="Casas C."/>
            <person name="Cheret G."/>
            <person name="Cziepluch C."/>
            <person name="Daignan-Fornier B."/>
            <person name="Dang V.-D."/>
            <person name="de Haan M."/>
            <person name="Delius H."/>
            <person name="Durand P."/>
            <person name="Fairhead C."/>
            <person name="Feldmann H."/>
            <person name="Gaillon L."/>
            <person name="Galisson F."/>
            <person name="Gamo F.-J."/>
            <person name="Gancedo C."/>
            <person name="Goffeau A."/>
            <person name="Goulding S.E."/>
            <person name="Grivell L.A."/>
            <person name="Habbig B."/>
            <person name="Hand N.J."/>
            <person name="Hani J."/>
            <person name="Hattenhorst U."/>
            <person name="Hebling U."/>
            <person name="Hernando Y."/>
            <person name="Herrero E."/>
            <person name="Heumann K."/>
            <person name="Hiesel R."/>
            <person name="Hilger F."/>
            <person name="Hofmann B."/>
            <person name="Hollenberg C.P."/>
            <person name="Hughes B."/>
            <person name="Jauniaux J.-C."/>
            <person name="Kalogeropoulos A."/>
            <person name="Katsoulou C."/>
            <person name="Kordes E."/>
            <person name="Lafuente M.J."/>
            <person name="Landt O."/>
            <person name="Louis E.J."/>
            <person name="Maarse A.C."/>
            <person name="Madania A."/>
            <person name="Mannhaupt G."/>
            <person name="Marck C."/>
            <person name="Martin R.P."/>
            <person name="Mewes H.-W."/>
            <person name="Michaux G."/>
            <person name="Paces V."/>
            <person name="Parle-McDermott A.G."/>
            <person name="Pearson B.M."/>
            <person name="Perrin A."/>
            <person name="Pettersson B."/>
            <person name="Poch O."/>
            <person name="Pohl T.M."/>
            <person name="Poirey R."/>
            <person name="Portetelle D."/>
            <person name="Pujol A."/>
            <person name="Purnelle B."/>
            <person name="Ramezani Rad M."/>
            <person name="Rechmann S."/>
            <person name="Schwager C."/>
            <person name="Schweizer M."/>
            <person name="Sor F."/>
            <person name="Sterky F."/>
            <person name="Tarassov I.A."/>
            <person name="Teodoru C."/>
            <person name="Tettelin H."/>
            <person name="Thierry A."/>
            <person name="Tobiasch E."/>
            <person name="Tzermia M."/>
            <person name="Uhlen M."/>
            <person name="Unseld M."/>
            <person name="Valens M."/>
            <person name="Vandenbol M."/>
            <person name="Vetter I."/>
            <person name="Vlcek C."/>
            <person name="Voet M."/>
            <person name="Volckaert G."/>
            <person name="Voss H."/>
            <person name="Wambutt R."/>
            <person name="Wedler H."/>
            <person name="Wiemann S."/>
            <person name="Winsor B."/>
            <person name="Wolfe K.H."/>
            <person name="Zollner A."/>
            <person name="Zumstein E."/>
            <person name="Kleine K."/>
        </authorList>
    </citation>
    <scope>NUCLEOTIDE SEQUENCE [LARGE SCALE GENOMIC DNA]</scope>
    <source>
        <strain>ATCC 204508 / S288c</strain>
    </source>
</reference>
<reference key="4">
    <citation type="journal article" date="2014" name="G3 (Bethesda)">
        <title>The reference genome sequence of Saccharomyces cerevisiae: Then and now.</title>
        <authorList>
            <person name="Engel S.R."/>
            <person name="Dietrich F.S."/>
            <person name="Fisk D.G."/>
            <person name="Binkley G."/>
            <person name="Balakrishnan R."/>
            <person name="Costanzo M.C."/>
            <person name="Dwight S.S."/>
            <person name="Hitz B.C."/>
            <person name="Karra K."/>
            <person name="Nash R.S."/>
            <person name="Weng S."/>
            <person name="Wong E.D."/>
            <person name="Lloyd P."/>
            <person name="Skrzypek M.S."/>
            <person name="Miyasato S.R."/>
            <person name="Simison M."/>
            <person name="Cherry J.M."/>
        </authorList>
    </citation>
    <scope>GENOME REANNOTATION</scope>
    <source>
        <strain>ATCC 204508 / S288c</strain>
    </source>
</reference>
<reference key="5">
    <citation type="journal article" date="2007" name="Genome Res.">
        <title>Approaching a complete repository of sequence-verified protein-encoding clones for Saccharomyces cerevisiae.</title>
        <authorList>
            <person name="Hu Y."/>
            <person name="Rolfs A."/>
            <person name="Bhullar B."/>
            <person name="Murthy T.V.S."/>
            <person name="Zhu C."/>
            <person name="Berger M.F."/>
            <person name="Camargo A.A."/>
            <person name="Kelley F."/>
            <person name="McCarron S."/>
            <person name="Jepson D."/>
            <person name="Richardson A."/>
            <person name="Raphael J."/>
            <person name="Moreira D."/>
            <person name="Taycher E."/>
            <person name="Zuo D."/>
            <person name="Mohr S."/>
            <person name="Kane M.F."/>
            <person name="Williamson J."/>
            <person name="Simpson A.J.G."/>
            <person name="Bulyk M.L."/>
            <person name="Harlow E."/>
            <person name="Marsischky G."/>
            <person name="Kolodner R.D."/>
            <person name="LaBaer J."/>
        </authorList>
    </citation>
    <scope>NUCLEOTIDE SEQUENCE [GENOMIC DNA]</scope>
    <source>
        <strain>ATCC 204508 / S288c</strain>
    </source>
</reference>
<reference key="6">
    <citation type="journal article" date="1996" name="Yeast">
        <title>Sequencing and analysis of 51 kb on the right arm of chromosome XV from Saccharomyces cerevisiae reveals 30 open reading frames.</title>
        <authorList>
            <person name="Wiemann S."/>
            <person name="Rechmann S."/>
            <person name="Benes V."/>
            <person name="Voss H."/>
            <person name="Schwager C."/>
            <person name="Vlcek C."/>
            <person name="Stegemann J."/>
            <person name="Zimmermann J."/>
            <person name="Erfle H."/>
            <person name="Paces V."/>
            <person name="Ansorge W."/>
        </authorList>
    </citation>
    <scope>NUCLEOTIDE SEQUENCE [GENOMIC DNA] OF 222-435</scope>
</reference>
<reference key="7">
    <citation type="journal article" date="2003" name="Nature">
        <title>Global analysis of protein localization in budding yeast.</title>
        <authorList>
            <person name="Huh W.-K."/>
            <person name="Falvo J.V."/>
            <person name="Gerke L.C."/>
            <person name="Carroll A.S."/>
            <person name="Howson R.W."/>
            <person name="Weissman J.S."/>
            <person name="O'Shea E.K."/>
        </authorList>
    </citation>
    <scope>SUBCELLULAR LOCATION [LARGE SCALE ANALYSIS]</scope>
</reference>
<reference key="8">
    <citation type="journal article" date="2003" name="Nature">
        <title>Global analysis of protein expression in yeast.</title>
        <authorList>
            <person name="Ghaemmaghami S."/>
            <person name="Huh W.-K."/>
            <person name="Bower K."/>
            <person name="Howson R.W."/>
            <person name="Belle A."/>
            <person name="Dephoure N."/>
            <person name="O'Shea E.K."/>
            <person name="Weissman J.S."/>
        </authorList>
    </citation>
    <scope>LEVEL OF PROTEIN EXPRESSION [LARGE SCALE ANALYSIS]</scope>
</reference>
<reference key="9">
    <citation type="journal article" date="2007" name="J. Proteome Res.">
        <title>Large-scale phosphorylation analysis of alpha-factor-arrested Saccharomyces cerevisiae.</title>
        <authorList>
            <person name="Li X."/>
            <person name="Gerber S.A."/>
            <person name="Rudner A.D."/>
            <person name="Beausoleil S.A."/>
            <person name="Haas W."/>
            <person name="Villen J."/>
            <person name="Elias J.E."/>
            <person name="Gygi S.P."/>
        </authorList>
    </citation>
    <scope>PHOSPHORYLATION [LARGE SCALE ANALYSIS] AT SER-365</scope>
    <scope>IDENTIFICATION BY MASS SPECTROMETRY [LARGE SCALE ANALYSIS]</scope>
    <source>
        <strain>ADR376</strain>
    </source>
</reference>
<reference key="10">
    <citation type="journal article" date="2008" name="Mol. Cell. Proteomics">
        <title>A multidimensional chromatography technology for in-depth phosphoproteome analysis.</title>
        <authorList>
            <person name="Albuquerque C.P."/>
            <person name="Smolka M.B."/>
            <person name="Payne S.H."/>
            <person name="Bafna V."/>
            <person name="Eng J."/>
            <person name="Zhou H."/>
        </authorList>
    </citation>
    <scope>IDENTIFICATION BY MASS SPECTROMETRY [LARGE SCALE ANALYSIS]</scope>
</reference>
<reference key="11">
    <citation type="journal article" date="2009" name="Science">
        <title>Global analysis of Cdk1 substrate phosphorylation sites provides insights into evolution.</title>
        <authorList>
            <person name="Holt L.J."/>
            <person name="Tuch B.B."/>
            <person name="Villen J."/>
            <person name="Johnson A.D."/>
            <person name="Gygi S.P."/>
            <person name="Morgan D.O."/>
        </authorList>
    </citation>
    <scope>IDENTIFICATION BY MASS SPECTROMETRY [LARGE SCALE ANALYSIS]</scope>
</reference>
<reference key="12">
    <citation type="journal article" date="2012" name="Proc. Natl. Acad. Sci. U.S.A.">
        <title>N-terminal acetylome analyses and functional insights of the N-terminal acetyltransferase NatB.</title>
        <authorList>
            <person name="Van Damme P."/>
            <person name="Lasa M."/>
            <person name="Polevoda B."/>
            <person name="Gazquez C."/>
            <person name="Elosegui-Artola A."/>
            <person name="Kim D.S."/>
            <person name="De Juan-Pardo E."/>
            <person name="Demeyer K."/>
            <person name="Hole K."/>
            <person name="Larrea E."/>
            <person name="Timmerman E."/>
            <person name="Prieto J."/>
            <person name="Arnesen T."/>
            <person name="Sherman F."/>
            <person name="Gevaert K."/>
            <person name="Aldabe R."/>
        </authorList>
    </citation>
    <scope>IDENTIFICATION BY MASS SPECTROMETRY [LARGE SCALE ANALYSIS]</scope>
</reference>
<sequence length="435" mass="49146">MVVNTIYIARHGYRSNWLPEGPYPDPLTGIDSDVPLAEHGVQQAKELAHYLLSLDNQPEAAFASPFYRCLETVQPIAKLLEIPVYLERGIGEWYRPDRKPVIPVPAGYEILSKFFPGVISQEWDSTLTPNEKGETEQEMYMRFKKFWPLFIERVEKEYPNVECILLVTHAASKIALGMSLLGYDNPRMSLNENGDKIRSGSCSLDKYEILKKSYDTIDETDDQTSFTYIPFSDRKWVLTMNGNTEFLSSGEEMNWNFDCVAEAGSDADIKKRQMTKKTSSPIPEADDQTEVETVYISVDIPSGNYKERTEIAKSAILQYSGLETDAPLFRIGNRLYEGSWERLVGTELAFPNAAHVHKKTAGLLSPTEENETTNAGQSKGSSTANDPNIQIQEEDVGLPDSTNTSRDHTGDKEEVQSEKIYRIKERIVLSNVRPM</sequence>
<organism>
    <name type="scientific">Saccharomyces cerevisiae (strain ATCC 204508 / S288c)</name>
    <name type="common">Baker's yeast</name>
    <dbReference type="NCBI Taxonomy" id="559292"/>
    <lineage>
        <taxon>Eukaryota</taxon>
        <taxon>Fungi</taxon>
        <taxon>Dikarya</taxon>
        <taxon>Ascomycota</taxon>
        <taxon>Saccharomycotina</taxon>
        <taxon>Saccharomycetes</taxon>
        <taxon>Saccharomycetales</taxon>
        <taxon>Saccharomycetaceae</taxon>
        <taxon>Saccharomyces</taxon>
    </lineage>
</organism>
<feature type="chain" id="PRO_0000072499" description="Transcription factor tau 55 kDa subunit">
    <location>
        <begin position="1"/>
        <end position="435"/>
    </location>
</feature>
<feature type="region of interest" description="Disordered" evidence="1">
    <location>
        <begin position="362"/>
        <end position="417"/>
    </location>
</feature>
<feature type="compositionally biased region" description="Polar residues" evidence="1">
    <location>
        <begin position="372"/>
        <end position="391"/>
    </location>
</feature>
<feature type="compositionally biased region" description="Basic and acidic residues" evidence="1">
    <location>
        <begin position="405"/>
        <end position="417"/>
    </location>
</feature>
<feature type="modified residue" description="Phosphoserine" evidence="6">
    <location>
        <position position="365"/>
    </location>
</feature>
<feature type="sequence conflict" description="In Ref. 5; AAT92929." evidence="5" ref="5">
    <original>A</original>
    <variation>V</variation>
    <location>
        <position position="9"/>
    </location>
</feature>
<feature type="strand" evidence="7">
    <location>
        <begin position="5"/>
        <end position="10"/>
    </location>
</feature>
<feature type="helix" evidence="7">
    <location>
        <begin position="15"/>
        <end position="17"/>
    </location>
</feature>
<feature type="strand" evidence="7">
    <location>
        <begin position="18"/>
        <end position="20"/>
    </location>
</feature>
<feature type="helix" evidence="7">
    <location>
        <begin position="38"/>
        <end position="52"/>
    </location>
</feature>
<feature type="strand" evidence="8">
    <location>
        <begin position="54"/>
        <end position="56"/>
    </location>
</feature>
<feature type="strand" evidence="7">
    <location>
        <begin position="61"/>
        <end position="63"/>
    </location>
</feature>
<feature type="helix" evidence="7">
    <location>
        <begin position="67"/>
        <end position="80"/>
    </location>
</feature>
<feature type="strand" evidence="7">
    <location>
        <begin position="84"/>
        <end position="86"/>
    </location>
</feature>
<feature type="helix" evidence="7">
    <location>
        <begin position="88"/>
        <end position="90"/>
    </location>
</feature>
<feature type="helix" evidence="7">
    <location>
        <begin position="108"/>
        <end position="114"/>
    </location>
</feature>
<feature type="turn" evidence="7">
    <location>
        <begin position="116"/>
        <end position="118"/>
    </location>
</feature>
<feature type="helix" evidence="7">
    <location>
        <begin position="136"/>
        <end position="157"/>
    </location>
</feature>
<feature type="strand" evidence="7">
    <location>
        <begin position="163"/>
        <end position="168"/>
    </location>
</feature>
<feature type="helix" evidence="7">
    <location>
        <begin position="170"/>
        <end position="181"/>
    </location>
</feature>
<feature type="strand" evidence="8">
    <location>
        <begin position="190"/>
        <end position="194"/>
    </location>
</feature>
<feature type="strand" evidence="7">
    <location>
        <begin position="204"/>
        <end position="209"/>
    </location>
</feature>
<feature type="helix" evidence="7">
    <location>
        <begin position="231"/>
        <end position="233"/>
    </location>
</feature>
<feature type="strand" evidence="7">
    <location>
        <begin position="236"/>
        <end position="243"/>
    </location>
</feature>
<feature type="strand" evidence="8">
    <location>
        <begin position="247"/>
        <end position="249"/>
    </location>
</feature>
<feature type="helix" evidence="7">
    <location>
        <begin position="257"/>
        <end position="259"/>
    </location>
</feature>
<feature type="strand" evidence="8">
    <location>
        <begin position="292"/>
        <end position="299"/>
    </location>
</feature>
<feature type="strand" evidence="8">
    <location>
        <begin position="303"/>
        <end position="306"/>
    </location>
</feature>
<feature type="strand" evidence="8">
    <location>
        <begin position="316"/>
        <end position="320"/>
    </location>
</feature>
<feature type="strand" evidence="8">
    <location>
        <begin position="324"/>
        <end position="326"/>
    </location>
</feature>
<feature type="strand" evidence="8">
    <location>
        <begin position="328"/>
        <end position="331"/>
    </location>
</feature>
<feature type="strand" evidence="8">
    <location>
        <begin position="334"/>
        <end position="340"/>
    </location>
</feature>
<feature type="strand" evidence="8">
    <location>
        <begin position="344"/>
        <end position="349"/>
    </location>
</feature>
<feature type="helix" evidence="8">
    <location>
        <begin position="351"/>
        <end position="353"/>
    </location>
</feature>
<feature type="strand" evidence="8">
    <location>
        <begin position="421"/>
        <end position="431"/>
    </location>
</feature>